<proteinExistence type="evidence at protein level"/>
<accession>O84866</accession>
<name>Y858_CHLTR</name>
<reference key="1">
    <citation type="journal article" date="1998" name="Science">
        <title>Genome sequence of an obligate intracellular pathogen of humans: Chlamydia trachomatis.</title>
        <authorList>
            <person name="Stephens R.S."/>
            <person name="Kalman S."/>
            <person name="Lammel C.J."/>
            <person name="Fan J."/>
            <person name="Marathe R."/>
            <person name="Aravind L."/>
            <person name="Mitchell W.P."/>
            <person name="Olinger L."/>
            <person name="Tatusov R.L."/>
            <person name="Zhao Q."/>
            <person name="Koonin E.V."/>
            <person name="Davis R.W."/>
        </authorList>
    </citation>
    <scope>NUCLEOTIDE SEQUENCE [LARGE SCALE GENOMIC DNA]</scope>
    <source>
        <strain>ATCC VR-885 / DSM 19411 / UW-3/Cx</strain>
    </source>
</reference>
<sequence length="601" mass="67253">MKMNRIWLLLLTFSSAIHSPVQGESLVCKNALQDLSFLEHLLQVKYAPKTWKEQYLGWDLVQSSVSAQQKLRTQENPSTSFCQQVLADFIGGLNDFHAGVTFFAIESAYLPYTVQKSSDGRFYFVDIMTFSSEIRVGDELLEVDGAPVQDVLATLYGSNHKGTAAEESAALRTLFSRMASLGHKVPSGRTTLKIRRPFGTTREVRVKWRYVPEGVGDLATIAPSIRAPQLQKSMRSFFPKKDDAFHRSSSLFYSPMVPHFWAELRNHYATSGLKSGYNIGSTDGFLPVIGPVIWESEGLFRAYISSVTDGDGKSHKVGFLRIPTYSWQDMEDFDPSGPPPWEEFAKIIQVFSSNTEALIIDQTNNPGGSVLYLYALLSMLTDRPLELPKHRMILTQDEVVDALDWLTLLENVDTNVESRLALGDNMEGYTVDLQVAEYLKSFGRQVLNCWSKGDIELSTPIPLFGFEKIHPHPRVQYSKPICVLINEQDFSCADFFPVVLKDNDRALIVGTRTAGAGGFVFNVQFPNRTGIKTCSLTGSLAVREHGAFIENIGVEPHIDLPFTANDIRYKGYSEYLDKVKKLVCQLINNDGTIILAEDGSF</sequence>
<comment type="similarity">
    <text evidence="1">Belongs to the chlamydial CPn_1016/CT_858/TC_0248 family.</text>
</comment>
<organism>
    <name type="scientific">Chlamydia trachomatis serovar D (strain ATCC VR-885 / DSM 19411 / UW-3/Cx)</name>
    <dbReference type="NCBI Taxonomy" id="272561"/>
    <lineage>
        <taxon>Bacteria</taxon>
        <taxon>Pseudomonadati</taxon>
        <taxon>Chlamydiota</taxon>
        <taxon>Chlamydiia</taxon>
        <taxon>Chlamydiales</taxon>
        <taxon>Chlamydiaceae</taxon>
        <taxon>Chlamydia/Chlamydophila group</taxon>
        <taxon>Chlamydia</taxon>
    </lineage>
</organism>
<gene>
    <name type="ordered locus">CT_858</name>
</gene>
<evidence type="ECO:0000305" key="1"/>
<evidence type="ECO:0007829" key="2">
    <source>
        <dbReference type="PDB" id="3DJA"/>
    </source>
</evidence>
<evidence type="ECO:0007829" key="3">
    <source>
        <dbReference type="PDB" id="3DOR"/>
    </source>
</evidence>
<evidence type="ECO:0007829" key="4">
    <source>
        <dbReference type="PDB" id="3DPM"/>
    </source>
</evidence>
<evidence type="ECO:0007829" key="5">
    <source>
        <dbReference type="PDB" id="3DPN"/>
    </source>
</evidence>
<feature type="chain" id="PRO_0000218435" description="Protein CT_858">
    <location>
        <begin position="1"/>
        <end position="601"/>
    </location>
</feature>
<feature type="helix" evidence="3">
    <location>
        <begin position="26"/>
        <end position="45"/>
    </location>
</feature>
<feature type="helix" evidence="3">
    <location>
        <begin position="49"/>
        <end position="55"/>
    </location>
</feature>
<feature type="helix" evidence="3">
    <location>
        <begin position="60"/>
        <end position="73"/>
    </location>
</feature>
<feature type="strand" evidence="3">
    <location>
        <begin position="74"/>
        <end position="76"/>
    </location>
</feature>
<feature type="helix" evidence="3">
    <location>
        <begin position="79"/>
        <end position="91"/>
    </location>
</feature>
<feature type="strand" evidence="3">
    <location>
        <begin position="99"/>
        <end position="103"/>
    </location>
</feature>
<feature type="strand" evidence="3">
    <location>
        <begin position="107"/>
        <end position="109"/>
    </location>
</feature>
<feature type="strand" evidence="3">
    <location>
        <begin position="111"/>
        <end position="116"/>
    </location>
</feature>
<feature type="strand" evidence="5">
    <location>
        <begin position="118"/>
        <end position="120"/>
    </location>
</feature>
<feature type="strand" evidence="3">
    <location>
        <begin position="122"/>
        <end position="127"/>
    </location>
</feature>
<feature type="strand" evidence="4">
    <location>
        <begin position="129"/>
        <end position="131"/>
    </location>
</feature>
<feature type="strand" evidence="3">
    <location>
        <begin position="139"/>
        <end position="143"/>
    </location>
</feature>
<feature type="helix" evidence="3">
    <location>
        <begin position="148"/>
        <end position="153"/>
    </location>
</feature>
<feature type="helix" evidence="3">
    <location>
        <begin position="164"/>
        <end position="174"/>
    </location>
</feature>
<feature type="strand" evidence="3">
    <location>
        <begin position="176"/>
        <end position="178"/>
    </location>
</feature>
<feature type="helix" evidence="3">
    <location>
        <begin position="179"/>
        <end position="181"/>
    </location>
</feature>
<feature type="strand" evidence="3">
    <location>
        <begin position="188"/>
        <end position="195"/>
    </location>
</feature>
<feature type="strand" evidence="5">
    <location>
        <begin position="197"/>
        <end position="199"/>
    </location>
</feature>
<feature type="strand" evidence="3">
    <location>
        <begin position="201"/>
        <end position="207"/>
    </location>
</feature>
<feature type="strand" evidence="3">
    <location>
        <begin position="209"/>
        <end position="211"/>
    </location>
</feature>
<feature type="helix" evidence="3">
    <location>
        <begin position="218"/>
        <end position="221"/>
    </location>
</feature>
<feature type="helix" evidence="3">
    <location>
        <begin position="222"/>
        <end position="224"/>
    </location>
</feature>
<feature type="strand" evidence="5">
    <location>
        <begin position="252"/>
        <end position="254"/>
    </location>
</feature>
<feature type="helix" evidence="5">
    <location>
        <begin position="259"/>
        <end position="270"/>
    </location>
</feature>
<feature type="strand" evidence="3">
    <location>
        <begin position="293"/>
        <end position="295"/>
    </location>
</feature>
<feature type="strand" evidence="3">
    <location>
        <begin position="298"/>
        <end position="308"/>
    </location>
</feature>
<feature type="strand" evidence="3">
    <location>
        <begin position="310"/>
        <end position="312"/>
    </location>
</feature>
<feature type="strand" evidence="3">
    <location>
        <begin position="314"/>
        <end position="321"/>
    </location>
</feature>
<feature type="helix" evidence="3">
    <location>
        <begin position="327"/>
        <end position="329"/>
    </location>
</feature>
<feature type="strand" evidence="4">
    <location>
        <begin position="335"/>
        <end position="337"/>
    </location>
</feature>
<feature type="helix" evidence="3">
    <location>
        <begin position="340"/>
        <end position="354"/>
    </location>
</feature>
<feature type="strand" evidence="3">
    <location>
        <begin position="356"/>
        <end position="361"/>
    </location>
</feature>
<feature type="helix" evidence="3">
    <location>
        <begin position="370"/>
        <end position="378"/>
    </location>
</feature>
<feature type="strand" evidence="3">
    <location>
        <begin position="389"/>
        <end position="392"/>
    </location>
</feature>
<feature type="helix" evidence="3">
    <location>
        <begin position="396"/>
        <end position="409"/>
    </location>
</feature>
<feature type="helix" evidence="3">
    <location>
        <begin position="415"/>
        <end position="422"/>
    </location>
</feature>
<feature type="strand" evidence="3">
    <location>
        <begin position="424"/>
        <end position="426"/>
    </location>
</feature>
<feature type="helix" evidence="3">
    <location>
        <begin position="433"/>
        <end position="451"/>
    </location>
</feature>
<feature type="helix" evidence="3">
    <location>
        <begin position="463"/>
        <end position="465"/>
    </location>
</feature>
<feature type="strand" evidence="2">
    <location>
        <begin position="467"/>
        <end position="469"/>
    </location>
</feature>
<feature type="strand" evidence="3">
    <location>
        <begin position="481"/>
        <end position="485"/>
    </location>
</feature>
<feature type="helix" evidence="3">
    <location>
        <begin position="492"/>
        <end position="502"/>
    </location>
</feature>
<feature type="strand" evidence="3">
    <location>
        <begin position="506"/>
        <end position="511"/>
    </location>
</feature>
<feature type="strand" evidence="3">
    <location>
        <begin position="520"/>
        <end position="523"/>
    </location>
</feature>
<feature type="strand" evidence="3">
    <location>
        <begin position="531"/>
        <end position="537"/>
    </location>
</feature>
<feature type="strand" evidence="3">
    <location>
        <begin position="539"/>
        <end position="542"/>
    </location>
</feature>
<feature type="strand" evidence="5">
    <location>
        <begin position="544"/>
        <end position="546"/>
    </location>
</feature>
<feature type="turn" evidence="3">
    <location>
        <begin position="550"/>
        <end position="552"/>
    </location>
</feature>
<feature type="strand" evidence="3">
    <location>
        <begin position="557"/>
        <end position="559"/>
    </location>
</feature>
<feature type="helix" evidence="3">
    <location>
        <begin position="564"/>
        <end position="568"/>
    </location>
</feature>
<feature type="helix" evidence="3">
    <location>
        <begin position="573"/>
        <end position="589"/>
    </location>
</feature>
<protein>
    <recommendedName>
        <fullName>Protein CT_858</fullName>
    </recommendedName>
</protein>
<keyword id="KW-0002">3D-structure</keyword>
<keyword id="KW-1185">Reference proteome</keyword>
<dbReference type="EMBL" id="AE001273">
    <property type="protein sequence ID" value="AAC68456.2"/>
    <property type="molecule type" value="Genomic_DNA"/>
</dbReference>
<dbReference type="PIR" id="A71461">
    <property type="entry name" value="A71461"/>
</dbReference>
<dbReference type="RefSeq" id="NP_220380.1">
    <property type="nucleotide sequence ID" value="NC_000117.1"/>
</dbReference>
<dbReference type="RefSeq" id="WP_009872247.1">
    <property type="nucleotide sequence ID" value="NC_000117.1"/>
</dbReference>
<dbReference type="PDB" id="3DJA">
    <property type="method" value="X-ray"/>
    <property type="resolution" value="2.90 A"/>
    <property type="chains" value="A/B=23-601"/>
</dbReference>
<dbReference type="PDB" id="3DOR">
    <property type="method" value="X-ray"/>
    <property type="resolution" value="2.20 A"/>
    <property type="chains" value="A/B=25-601"/>
</dbReference>
<dbReference type="PDB" id="3DPM">
    <property type="method" value="X-ray"/>
    <property type="resolution" value="2.35 A"/>
    <property type="chains" value="A/B=25-601"/>
</dbReference>
<dbReference type="PDB" id="3DPN">
    <property type="method" value="X-ray"/>
    <property type="resolution" value="3.30 A"/>
    <property type="chains" value="A/B=25-601"/>
</dbReference>
<dbReference type="PDBsum" id="3DJA"/>
<dbReference type="PDBsum" id="3DOR"/>
<dbReference type="PDBsum" id="3DPM"/>
<dbReference type="PDBsum" id="3DPN"/>
<dbReference type="SMR" id="O84866"/>
<dbReference type="STRING" id="272561.CT_858"/>
<dbReference type="MEROPS" id="S41.011"/>
<dbReference type="EnsemblBacteria" id="AAC68456">
    <property type="protein sequence ID" value="AAC68456"/>
    <property type="gene ID" value="CT_858"/>
</dbReference>
<dbReference type="GeneID" id="884659"/>
<dbReference type="KEGG" id="ctr:CT_858"/>
<dbReference type="PATRIC" id="fig|272561.5.peg.948"/>
<dbReference type="HOGENOM" id="CLU_452499_0_0_0"/>
<dbReference type="InParanoid" id="O84866"/>
<dbReference type="OrthoDB" id="16754at2"/>
<dbReference type="EvolutionaryTrace" id="O84866"/>
<dbReference type="Proteomes" id="UP000000431">
    <property type="component" value="Chromosome"/>
</dbReference>
<dbReference type="GO" id="GO:0030288">
    <property type="term" value="C:outer membrane-bounded periplasmic space"/>
    <property type="evidence" value="ECO:0000318"/>
    <property type="project" value="GO_Central"/>
</dbReference>
<dbReference type="GO" id="GO:0004175">
    <property type="term" value="F:endopeptidase activity"/>
    <property type="evidence" value="ECO:0000318"/>
    <property type="project" value="GO_Central"/>
</dbReference>
<dbReference type="GO" id="GO:0008236">
    <property type="term" value="F:serine-type peptidase activity"/>
    <property type="evidence" value="ECO:0007669"/>
    <property type="project" value="InterPro"/>
</dbReference>
<dbReference type="GO" id="GO:0006508">
    <property type="term" value="P:proteolysis"/>
    <property type="evidence" value="ECO:0007669"/>
    <property type="project" value="InterPro"/>
</dbReference>
<dbReference type="GO" id="GO:0007165">
    <property type="term" value="P:signal transduction"/>
    <property type="evidence" value="ECO:0000318"/>
    <property type="project" value="GO_Central"/>
</dbReference>
<dbReference type="CDD" id="cd07563">
    <property type="entry name" value="Peptidase_S41_IRBP"/>
    <property type="match status" value="1"/>
</dbReference>
<dbReference type="Gene3D" id="2.30.42.10">
    <property type="match status" value="1"/>
</dbReference>
<dbReference type="Gene3D" id="3.90.226.10">
    <property type="entry name" value="2-enoyl-CoA Hydratase, Chain A, domain 1"/>
    <property type="match status" value="1"/>
</dbReference>
<dbReference type="InterPro" id="IPR029045">
    <property type="entry name" value="ClpP/crotonase-like_dom_sf"/>
</dbReference>
<dbReference type="InterPro" id="IPR041126">
    <property type="entry name" value="CPAF_PDZ"/>
</dbReference>
<dbReference type="InterPro" id="IPR036034">
    <property type="entry name" value="PDZ_sf"/>
</dbReference>
<dbReference type="InterPro" id="IPR005151">
    <property type="entry name" value="Tail-specific_protease"/>
</dbReference>
<dbReference type="NCBIfam" id="NF033424">
    <property type="entry name" value="chlamy_CPAF"/>
    <property type="match status" value="1"/>
</dbReference>
<dbReference type="PANTHER" id="PTHR32060:SF30">
    <property type="entry name" value="CARBOXY-TERMINAL PROCESSING PROTEASE CTPA"/>
    <property type="match status" value="1"/>
</dbReference>
<dbReference type="PANTHER" id="PTHR32060">
    <property type="entry name" value="TAIL-SPECIFIC PROTEASE"/>
    <property type="match status" value="1"/>
</dbReference>
<dbReference type="Pfam" id="PF17816">
    <property type="entry name" value="PDZ_4"/>
    <property type="match status" value="1"/>
</dbReference>
<dbReference type="Pfam" id="PF03572">
    <property type="entry name" value="Peptidase_S41"/>
    <property type="match status" value="1"/>
</dbReference>
<dbReference type="SMART" id="SM00245">
    <property type="entry name" value="TSPc"/>
    <property type="match status" value="1"/>
</dbReference>
<dbReference type="SUPFAM" id="SSF52096">
    <property type="entry name" value="ClpP/crotonase"/>
    <property type="match status" value="1"/>
</dbReference>